<evidence type="ECO:0000255" key="1">
    <source>
        <dbReference type="HAMAP-Rule" id="MF_00453"/>
    </source>
</evidence>
<proteinExistence type="inferred from homology"/>
<name>PCKA_COXB1</name>
<comment type="function">
    <text evidence="1">Involved in the gluconeogenesis. Catalyzes the conversion of oxaloacetate (OAA) to phosphoenolpyruvate (PEP) through direct phosphoryl transfer between the nucleoside triphosphate and OAA.</text>
</comment>
<comment type="catalytic activity">
    <reaction evidence="1">
        <text>oxaloacetate + ATP = phosphoenolpyruvate + ADP + CO2</text>
        <dbReference type="Rhea" id="RHEA:18617"/>
        <dbReference type="ChEBI" id="CHEBI:16452"/>
        <dbReference type="ChEBI" id="CHEBI:16526"/>
        <dbReference type="ChEBI" id="CHEBI:30616"/>
        <dbReference type="ChEBI" id="CHEBI:58702"/>
        <dbReference type="ChEBI" id="CHEBI:456216"/>
        <dbReference type="EC" id="4.1.1.49"/>
    </reaction>
</comment>
<comment type="cofactor">
    <cofactor evidence="1">
        <name>Mn(2+)</name>
        <dbReference type="ChEBI" id="CHEBI:29035"/>
    </cofactor>
    <text evidence="1">Binds 1 Mn(2+) ion per subunit.</text>
</comment>
<comment type="pathway">
    <text evidence="1">Carbohydrate biosynthesis; gluconeogenesis.</text>
</comment>
<comment type="subunit">
    <text evidence="1">Monomer.</text>
</comment>
<comment type="subcellular location">
    <subcellularLocation>
        <location evidence="1">Cytoplasm</location>
    </subcellularLocation>
</comment>
<comment type="similarity">
    <text evidence="1">Belongs to the phosphoenolpyruvate carboxykinase (ATP) family.</text>
</comment>
<sequence>MEQIAARVTYINLSPDELIQHAVKNGEGVLSSTGALAVTTGKRTGRSPKDRFIVKDEQTADQVAWGNINQPVEQRTFDQLWERALRYLSERAVYISHLQVGADDNYFLPLKVVTEFAWHNLFACDLFIRPSGDHANGKPSWVILSAPGLKTDPERDGVNSDGAVMINLSQRRVLFVGMPYAGEMKKAMFSVLNYLLPPHDVLPMHCAANAGQSGDVALFFGLSGTGKTTLSADPHRFLIGDDEHGWSATSVFNFEGGCYAKCIDLSQEREPMIWNAIRHGAIMENVVLDENGVPDYADARLTQNSRAAYPREHIPLRVENNRGRPPDAVLFLTCDLDGVLPPVALLTKEQAAYYFLSGYTALVGSTEVGSVKGVTSTFSTCFGAPFFPRPPTVYAELLMKRIEATGCQVYLVNTGWTGGAYGEGGERFSIPTTRAIVNAVLSGKLKEGPTEVLSGFNLTIPKSALGVDDHLLNPRKTWEDVSAYDARAQRLIQKFRENFEKFKVPAAIREAGPSDVH</sequence>
<feature type="chain" id="PRO_1000125058" description="Phosphoenolpyruvate carboxykinase (ATP)">
    <location>
        <begin position="1"/>
        <end position="517"/>
    </location>
</feature>
<feature type="binding site" evidence="1">
    <location>
        <position position="46"/>
    </location>
    <ligand>
        <name>substrate</name>
    </ligand>
</feature>
<feature type="binding site" evidence="1">
    <location>
        <position position="180"/>
    </location>
    <ligand>
        <name>substrate</name>
    </ligand>
</feature>
<feature type="binding site" evidence="1">
    <location>
        <position position="186"/>
    </location>
    <ligand>
        <name>ATP</name>
        <dbReference type="ChEBI" id="CHEBI:30616"/>
    </ligand>
</feature>
<feature type="binding site" evidence="1">
    <location>
        <position position="186"/>
    </location>
    <ligand>
        <name>Mn(2+)</name>
        <dbReference type="ChEBI" id="CHEBI:29035"/>
    </ligand>
</feature>
<feature type="binding site" evidence="1">
    <location>
        <position position="186"/>
    </location>
    <ligand>
        <name>substrate</name>
    </ligand>
</feature>
<feature type="binding site" evidence="1">
    <location>
        <position position="205"/>
    </location>
    <ligand>
        <name>ATP</name>
        <dbReference type="ChEBI" id="CHEBI:30616"/>
    </ligand>
</feature>
<feature type="binding site" evidence="1">
    <location>
        <position position="205"/>
    </location>
    <ligand>
        <name>Mn(2+)</name>
        <dbReference type="ChEBI" id="CHEBI:29035"/>
    </ligand>
</feature>
<feature type="binding site" evidence="1">
    <location>
        <begin position="221"/>
        <end position="229"/>
    </location>
    <ligand>
        <name>ATP</name>
        <dbReference type="ChEBI" id="CHEBI:30616"/>
    </ligand>
</feature>
<feature type="binding site" evidence="1">
    <location>
        <position position="242"/>
    </location>
    <ligand>
        <name>Mn(2+)</name>
        <dbReference type="ChEBI" id="CHEBI:29035"/>
    </ligand>
</feature>
<feature type="binding site" evidence="1">
    <location>
        <position position="270"/>
    </location>
    <ligand>
        <name>ATP</name>
        <dbReference type="ChEBI" id="CHEBI:30616"/>
    </ligand>
</feature>
<feature type="binding site" evidence="1">
    <location>
        <position position="306"/>
    </location>
    <ligand>
        <name>ATP</name>
        <dbReference type="ChEBI" id="CHEBI:30616"/>
    </ligand>
</feature>
<feature type="binding site" evidence="1">
    <location>
        <position position="306"/>
    </location>
    <ligand>
        <name>substrate</name>
    </ligand>
</feature>
<feature type="binding site" evidence="1">
    <location>
        <position position="433"/>
    </location>
    <ligand>
        <name>ATP</name>
        <dbReference type="ChEBI" id="CHEBI:30616"/>
    </ligand>
</feature>
<reference key="1">
    <citation type="journal article" date="2009" name="Infect. Immun.">
        <title>Comparative genomics reveal extensive transposon-mediated genomic plasticity and diversity among potential effector proteins within the genus Coxiella.</title>
        <authorList>
            <person name="Beare P.A."/>
            <person name="Unsworth N."/>
            <person name="Andoh M."/>
            <person name="Voth D.E."/>
            <person name="Omsland A."/>
            <person name="Gilk S.D."/>
            <person name="Williams K.P."/>
            <person name="Sobral B.W."/>
            <person name="Kupko J.J. III"/>
            <person name="Porcella S.F."/>
            <person name="Samuel J.E."/>
            <person name="Heinzen R.A."/>
        </authorList>
    </citation>
    <scope>NUCLEOTIDE SEQUENCE [LARGE SCALE GENOMIC DNA]</scope>
    <source>
        <strain>CbuK_Q154</strain>
    </source>
</reference>
<gene>
    <name evidence="1" type="primary">pckA</name>
    <name type="ordered locus">CbuK_2142</name>
</gene>
<keyword id="KW-0067">ATP-binding</keyword>
<keyword id="KW-0963">Cytoplasm</keyword>
<keyword id="KW-0210">Decarboxylase</keyword>
<keyword id="KW-0312">Gluconeogenesis</keyword>
<keyword id="KW-0456">Lyase</keyword>
<keyword id="KW-0464">Manganese</keyword>
<keyword id="KW-0479">Metal-binding</keyword>
<keyword id="KW-0547">Nucleotide-binding</keyword>
<dbReference type="EC" id="4.1.1.49" evidence="1"/>
<dbReference type="EMBL" id="CP001020">
    <property type="protein sequence ID" value="ACJ21232.1"/>
    <property type="molecule type" value="Genomic_DNA"/>
</dbReference>
<dbReference type="RefSeq" id="WP_005769925.1">
    <property type="nucleotide sequence ID" value="NC_011528.1"/>
</dbReference>
<dbReference type="SMR" id="B6J6M2"/>
<dbReference type="KEGG" id="cbc:CbuK_2142"/>
<dbReference type="HOGENOM" id="CLU_018247_0_1_6"/>
<dbReference type="UniPathway" id="UPA00138"/>
<dbReference type="GO" id="GO:0005829">
    <property type="term" value="C:cytosol"/>
    <property type="evidence" value="ECO:0007669"/>
    <property type="project" value="TreeGrafter"/>
</dbReference>
<dbReference type="GO" id="GO:0005524">
    <property type="term" value="F:ATP binding"/>
    <property type="evidence" value="ECO:0007669"/>
    <property type="project" value="UniProtKB-UniRule"/>
</dbReference>
<dbReference type="GO" id="GO:0046872">
    <property type="term" value="F:metal ion binding"/>
    <property type="evidence" value="ECO:0007669"/>
    <property type="project" value="UniProtKB-KW"/>
</dbReference>
<dbReference type="GO" id="GO:0004612">
    <property type="term" value="F:phosphoenolpyruvate carboxykinase (ATP) activity"/>
    <property type="evidence" value="ECO:0007669"/>
    <property type="project" value="UniProtKB-UniRule"/>
</dbReference>
<dbReference type="GO" id="GO:0006094">
    <property type="term" value="P:gluconeogenesis"/>
    <property type="evidence" value="ECO:0007669"/>
    <property type="project" value="UniProtKB-UniRule"/>
</dbReference>
<dbReference type="CDD" id="cd00484">
    <property type="entry name" value="PEPCK_ATP"/>
    <property type="match status" value="1"/>
</dbReference>
<dbReference type="Gene3D" id="3.90.228.20">
    <property type="match status" value="1"/>
</dbReference>
<dbReference type="Gene3D" id="3.40.449.10">
    <property type="entry name" value="Phosphoenolpyruvate Carboxykinase, domain 1"/>
    <property type="match status" value="1"/>
</dbReference>
<dbReference type="Gene3D" id="2.170.8.10">
    <property type="entry name" value="Phosphoenolpyruvate Carboxykinase, domain 2"/>
    <property type="match status" value="1"/>
</dbReference>
<dbReference type="HAMAP" id="MF_00453">
    <property type="entry name" value="PEPCK_ATP"/>
    <property type="match status" value="1"/>
</dbReference>
<dbReference type="InterPro" id="IPR001272">
    <property type="entry name" value="PEP_carboxykinase_ATP"/>
</dbReference>
<dbReference type="InterPro" id="IPR013035">
    <property type="entry name" value="PEP_carboxykinase_C"/>
</dbReference>
<dbReference type="InterPro" id="IPR008210">
    <property type="entry name" value="PEP_carboxykinase_N"/>
</dbReference>
<dbReference type="InterPro" id="IPR015994">
    <property type="entry name" value="PEPCK_ATP_CS"/>
</dbReference>
<dbReference type="NCBIfam" id="TIGR00224">
    <property type="entry name" value="pckA"/>
    <property type="match status" value="1"/>
</dbReference>
<dbReference type="NCBIfam" id="NF006820">
    <property type="entry name" value="PRK09344.1-2"/>
    <property type="match status" value="1"/>
</dbReference>
<dbReference type="NCBIfam" id="NF006821">
    <property type="entry name" value="PRK09344.1-3"/>
    <property type="match status" value="1"/>
</dbReference>
<dbReference type="NCBIfam" id="NF006823">
    <property type="entry name" value="PRK09344.1-5"/>
    <property type="match status" value="1"/>
</dbReference>
<dbReference type="PANTHER" id="PTHR30031:SF0">
    <property type="entry name" value="PHOSPHOENOLPYRUVATE CARBOXYKINASE (ATP)"/>
    <property type="match status" value="1"/>
</dbReference>
<dbReference type="PANTHER" id="PTHR30031">
    <property type="entry name" value="PHOSPHOENOLPYRUVATE CARBOXYKINASE ATP"/>
    <property type="match status" value="1"/>
</dbReference>
<dbReference type="Pfam" id="PF01293">
    <property type="entry name" value="PEPCK_ATP"/>
    <property type="match status" value="1"/>
</dbReference>
<dbReference type="PIRSF" id="PIRSF006294">
    <property type="entry name" value="PEP_crbxkin"/>
    <property type="match status" value="1"/>
</dbReference>
<dbReference type="SUPFAM" id="SSF68923">
    <property type="entry name" value="PEP carboxykinase N-terminal domain"/>
    <property type="match status" value="1"/>
</dbReference>
<dbReference type="SUPFAM" id="SSF53795">
    <property type="entry name" value="PEP carboxykinase-like"/>
    <property type="match status" value="1"/>
</dbReference>
<dbReference type="PROSITE" id="PS00532">
    <property type="entry name" value="PEPCK_ATP"/>
    <property type="match status" value="1"/>
</dbReference>
<organism>
    <name type="scientific">Coxiella burnetii (strain CbuK_Q154)</name>
    <name type="common">Coxiella burnetii (strain Q154)</name>
    <dbReference type="NCBI Taxonomy" id="434924"/>
    <lineage>
        <taxon>Bacteria</taxon>
        <taxon>Pseudomonadati</taxon>
        <taxon>Pseudomonadota</taxon>
        <taxon>Gammaproteobacteria</taxon>
        <taxon>Legionellales</taxon>
        <taxon>Coxiellaceae</taxon>
        <taxon>Coxiella</taxon>
    </lineage>
</organism>
<protein>
    <recommendedName>
        <fullName evidence="1">Phosphoenolpyruvate carboxykinase (ATP)</fullName>
        <shortName evidence="1">PCK</shortName>
        <shortName evidence="1">PEP carboxykinase</shortName>
        <shortName evidence="1">PEPCK</shortName>
        <ecNumber evidence="1">4.1.1.49</ecNumber>
    </recommendedName>
</protein>
<accession>B6J6M2</accession>